<keyword id="KW-0539">Nucleus</keyword>
<keyword id="KW-1185">Reference proteome</keyword>
<comment type="subcellular location">
    <subcellularLocation>
        <location evidence="1">Nucleus</location>
    </subcellularLocation>
</comment>
<comment type="similarity">
    <text evidence="2">Belongs to the NARF family.</text>
</comment>
<reference key="1">
    <citation type="submission" date="2004-07" db="EMBL/GenBank/DDBJ databases">
        <authorList>
            <consortium name="NIH - Zebrafish Gene Collection (ZGC) project"/>
        </authorList>
    </citation>
    <scope>NUCLEOTIDE SEQUENCE [LARGE SCALE MRNA]</scope>
</reference>
<proteinExistence type="evidence at transcript level"/>
<gene>
    <name type="primary">narf</name>
    <name type="ORF">zgc:92186</name>
</gene>
<name>NARF_DANRE</name>
<evidence type="ECO:0000250" key="1"/>
<evidence type="ECO:0000305" key="2"/>
<protein>
    <recommendedName>
        <fullName>Nuclear prelamin A recognition factor</fullName>
    </recommendedName>
</protein>
<accession>Q6DHP6</accession>
<organism>
    <name type="scientific">Danio rerio</name>
    <name type="common">Zebrafish</name>
    <name type="synonym">Brachydanio rerio</name>
    <dbReference type="NCBI Taxonomy" id="7955"/>
    <lineage>
        <taxon>Eukaryota</taxon>
        <taxon>Metazoa</taxon>
        <taxon>Chordata</taxon>
        <taxon>Craniata</taxon>
        <taxon>Vertebrata</taxon>
        <taxon>Euteleostomi</taxon>
        <taxon>Actinopterygii</taxon>
        <taxon>Neopterygii</taxon>
        <taxon>Teleostei</taxon>
        <taxon>Ostariophysi</taxon>
        <taxon>Cypriniformes</taxon>
        <taxon>Danionidae</taxon>
        <taxon>Danioninae</taxon>
        <taxon>Danio</taxon>
    </lineage>
</organism>
<feature type="chain" id="PRO_0000288482" description="Nuclear prelamin A recognition factor">
    <location>
        <begin position="1"/>
        <end position="465"/>
    </location>
</feature>
<sequence>MSEVKIGRKKEKCENCTKQCNKKQSDESINSLQEKGVASGEVRESTSVQQVLLSACLSCDGCISEDEGKRISQQNLDEINHVLALNKKCDTSKHKILVVSVCPQSVPFFAVKFQLDVSAAAQKLCGFLKSVGVHYVFDTTIAASFSILESQREFVQRYRRKHHDANAMPMFTSSCPGWIRYAERVLGSVVTPHICTARSPQQIMGSLVKNFFARQQKLTPEQVFHVVVAPCFDKKLEAVRDEFYNSILESRDVDCVLTSGEILHLMEQSKVTVEEVDSAPLDHVIGEISDSGLTRHDGRGSEGFLEHIFKHAAKEIFGLDVQDIVYKTLRNRDFQEVALERDGETLLQFAAVYGFRNIQTLVHRMRKGKVPYQLIEVLSCPGGCLSGRGQAEGEGGRPDRTLVQQMEEHYSSLPVRLPETNPEVQRLYQDWLDGHDSPHAQQSLHTQYKDHTHLPAHITNPDIQW</sequence>
<dbReference type="EMBL" id="BC075921">
    <property type="protein sequence ID" value="AAH75921.1"/>
    <property type="molecule type" value="mRNA"/>
</dbReference>
<dbReference type="RefSeq" id="NP_001002342.1">
    <property type="nucleotide sequence ID" value="NM_001002342.1"/>
</dbReference>
<dbReference type="SMR" id="Q6DHP6"/>
<dbReference type="FunCoup" id="Q6DHP6">
    <property type="interactions" value="1533"/>
</dbReference>
<dbReference type="STRING" id="7955.ENSDARP00000004610"/>
<dbReference type="PaxDb" id="7955-ENSDARP00000004610"/>
<dbReference type="Ensembl" id="ENSDART00000007053">
    <property type="protein sequence ID" value="ENSDARP00000004610"/>
    <property type="gene ID" value="ENSDARG00000024184"/>
</dbReference>
<dbReference type="Ensembl" id="ENSDART00000185595">
    <property type="protein sequence ID" value="ENSDARP00000157018"/>
    <property type="gene ID" value="ENSDARG00000110086"/>
</dbReference>
<dbReference type="GeneID" id="436614"/>
<dbReference type="KEGG" id="dre:436614"/>
<dbReference type="AGR" id="ZFIN:ZDB-GENE-040718-31"/>
<dbReference type="CTD" id="26502"/>
<dbReference type="ZFIN" id="ZDB-GENE-040718-31">
    <property type="gene designation" value="narf"/>
</dbReference>
<dbReference type="eggNOG" id="KOG2439">
    <property type="taxonomic scope" value="Eukaryota"/>
</dbReference>
<dbReference type="HOGENOM" id="CLU_018240_0_0_1"/>
<dbReference type="InParanoid" id="Q6DHP6"/>
<dbReference type="OMA" id="IKFCEHY"/>
<dbReference type="OrthoDB" id="10253113at2759"/>
<dbReference type="PhylomeDB" id="Q6DHP6"/>
<dbReference type="TreeFam" id="TF106273"/>
<dbReference type="PRO" id="PR:Q6DHP6"/>
<dbReference type="Proteomes" id="UP000000437">
    <property type="component" value="Alternate scaffold 12"/>
</dbReference>
<dbReference type="Proteomes" id="UP000000437">
    <property type="component" value="Chromosome 12"/>
</dbReference>
<dbReference type="Bgee" id="ENSDARG00000024184">
    <property type="expression patterns" value="Expressed in cleaving embryo and 29 other cell types or tissues"/>
</dbReference>
<dbReference type="ExpressionAtlas" id="Q6DHP6">
    <property type="expression patterns" value="baseline and differential"/>
</dbReference>
<dbReference type="GO" id="GO:0005638">
    <property type="term" value="C:lamin filament"/>
    <property type="evidence" value="ECO:0000318"/>
    <property type="project" value="GO_Central"/>
</dbReference>
<dbReference type="GO" id="GO:0005521">
    <property type="term" value="F:lamin binding"/>
    <property type="evidence" value="ECO:0000318"/>
    <property type="project" value="GO_Central"/>
</dbReference>
<dbReference type="Gene3D" id="3.40.50.1780">
    <property type="match status" value="1"/>
</dbReference>
<dbReference type="Gene3D" id="3.40.950.10">
    <property type="entry name" value="Fe-only Hydrogenase (Larger Subunit), Chain L, domain 3"/>
    <property type="match status" value="1"/>
</dbReference>
<dbReference type="InterPro" id="IPR050340">
    <property type="entry name" value="Cytosolic_Fe-S_CAF"/>
</dbReference>
<dbReference type="InterPro" id="IPR009016">
    <property type="entry name" value="Fe_hydrogenase"/>
</dbReference>
<dbReference type="InterPro" id="IPR004108">
    <property type="entry name" value="Fe_hydrogenase_lsu_C"/>
</dbReference>
<dbReference type="InterPro" id="IPR003149">
    <property type="entry name" value="Fe_hydrogenase_ssu"/>
</dbReference>
<dbReference type="PANTHER" id="PTHR11615">
    <property type="entry name" value="NITRATE, FORMATE, IRON DEHYDROGENASE"/>
    <property type="match status" value="1"/>
</dbReference>
<dbReference type="Pfam" id="PF02906">
    <property type="entry name" value="Fe_hyd_lg_C"/>
    <property type="match status" value="1"/>
</dbReference>
<dbReference type="Pfam" id="PF02256">
    <property type="entry name" value="Fe_hyd_SSU"/>
    <property type="match status" value="1"/>
</dbReference>
<dbReference type="SMART" id="SM00902">
    <property type="entry name" value="Fe_hyd_SSU"/>
    <property type="match status" value="1"/>
</dbReference>
<dbReference type="SUPFAM" id="SSF53920">
    <property type="entry name" value="Fe-only hydrogenase"/>
    <property type="match status" value="1"/>
</dbReference>